<dbReference type="EC" id="2.7.11.24" evidence="3 4"/>
<dbReference type="EMBL" id="AJ293282">
    <property type="protein sequence ID" value="CAC07958.1"/>
    <property type="molecule type" value="Genomic_DNA"/>
</dbReference>
<dbReference type="SMR" id="Q9GRU1"/>
<dbReference type="iPTMnet" id="Q9GRU1"/>
<dbReference type="VEuPathDB" id="TriTrypDB:LmxM.19.1440"/>
<dbReference type="OMA" id="SFFDFDY"/>
<dbReference type="GO" id="GO:0005524">
    <property type="term" value="F:ATP binding"/>
    <property type="evidence" value="ECO:0007669"/>
    <property type="project" value="UniProtKB-KW"/>
</dbReference>
<dbReference type="GO" id="GO:0004707">
    <property type="term" value="F:MAP kinase activity"/>
    <property type="evidence" value="ECO:0000314"/>
    <property type="project" value="UniProtKB"/>
</dbReference>
<dbReference type="GO" id="GO:0046872">
    <property type="term" value="F:metal ion binding"/>
    <property type="evidence" value="ECO:0007669"/>
    <property type="project" value="UniProtKB-KW"/>
</dbReference>
<dbReference type="GO" id="GO:0106310">
    <property type="term" value="F:protein serine kinase activity"/>
    <property type="evidence" value="ECO:0007669"/>
    <property type="project" value="RHEA"/>
</dbReference>
<dbReference type="GO" id="GO:0004674">
    <property type="term" value="F:protein serine/threonine kinase activity"/>
    <property type="evidence" value="ECO:0000314"/>
    <property type="project" value="UniProtKB"/>
</dbReference>
<dbReference type="CDD" id="cd07834">
    <property type="entry name" value="STKc_MAPK"/>
    <property type="match status" value="1"/>
</dbReference>
<dbReference type="FunFam" id="1.10.510.10:FF:000040">
    <property type="entry name" value="Mitogen-activated protein kinase"/>
    <property type="match status" value="1"/>
</dbReference>
<dbReference type="FunFam" id="3.30.200.20:FF:000046">
    <property type="entry name" value="Mitogen-activated protein kinase"/>
    <property type="match status" value="1"/>
</dbReference>
<dbReference type="Gene3D" id="3.30.200.20">
    <property type="entry name" value="Phosphorylase Kinase, domain 1"/>
    <property type="match status" value="1"/>
</dbReference>
<dbReference type="Gene3D" id="1.10.510.10">
    <property type="entry name" value="Transferase(Phosphotransferase) domain 1"/>
    <property type="match status" value="1"/>
</dbReference>
<dbReference type="InterPro" id="IPR011009">
    <property type="entry name" value="Kinase-like_dom_sf"/>
</dbReference>
<dbReference type="InterPro" id="IPR050117">
    <property type="entry name" value="MAP_kinase"/>
</dbReference>
<dbReference type="InterPro" id="IPR003527">
    <property type="entry name" value="MAP_kinase_CS"/>
</dbReference>
<dbReference type="InterPro" id="IPR000719">
    <property type="entry name" value="Prot_kinase_dom"/>
</dbReference>
<dbReference type="InterPro" id="IPR008271">
    <property type="entry name" value="Ser/Thr_kinase_AS"/>
</dbReference>
<dbReference type="PANTHER" id="PTHR24055">
    <property type="entry name" value="MITOGEN-ACTIVATED PROTEIN KINASE"/>
    <property type="match status" value="1"/>
</dbReference>
<dbReference type="Pfam" id="PF00069">
    <property type="entry name" value="Pkinase"/>
    <property type="match status" value="1"/>
</dbReference>
<dbReference type="SMART" id="SM00220">
    <property type="entry name" value="S_TKc"/>
    <property type="match status" value="1"/>
</dbReference>
<dbReference type="SUPFAM" id="SSF56112">
    <property type="entry name" value="Protein kinase-like (PK-like)"/>
    <property type="match status" value="1"/>
</dbReference>
<dbReference type="PROSITE" id="PS01351">
    <property type="entry name" value="MAPK"/>
    <property type="match status" value="1"/>
</dbReference>
<dbReference type="PROSITE" id="PS50011">
    <property type="entry name" value="PROTEIN_KINASE_DOM"/>
    <property type="match status" value="1"/>
</dbReference>
<dbReference type="PROSITE" id="PS00108">
    <property type="entry name" value="PROTEIN_KINASE_ST"/>
    <property type="match status" value="1"/>
</dbReference>
<reference evidence="7" key="1">
    <citation type="journal article" date="2003" name="Int. J. Parasitol.">
        <title>Identification of mitogen-activated protein kinase homologues from Leishmania mexicana.</title>
        <authorList>
            <person name="Wiese M."/>
            <person name="Wang Q."/>
            <person name="Gorcke I."/>
        </authorList>
    </citation>
    <scope>NUCLEOTIDE SEQUENCE [GENOMIC DNA]</scope>
    <scope>DEVELOPMENTAL STAGE</scope>
    <source>
        <strain evidence="7">MNYC/BZ/62/M379</strain>
    </source>
</reference>
<reference evidence="6" key="2">
    <citation type="journal article" date="2005" name="Kinetoplastid Biol. Dis.">
        <title>LmxMPK4, a mitogen-activated protein (MAP) kinase homologue essential for promastigotes and amastigotes of Leishmania mexicana.</title>
        <authorList>
            <person name="Wang Q."/>
            <person name="Melzer I.M."/>
            <person name="Kruse M."/>
            <person name="Sander-Juelch C."/>
            <person name="Wiese M."/>
        </authorList>
    </citation>
    <scope>FUNCTION</scope>
    <scope>CATALYTIC ACTIVITY</scope>
    <scope>COFACTOR</scope>
    <scope>BIOPHYSICOCHEMICAL PROPERTIES</scope>
    <scope>DEVELOPMENTAL STAGE</scope>
    <scope>MUTAGENESIS OF LYS-59</scope>
</reference>
<reference evidence="6" key="3">
    <citation type="journal article" date="2010" name="Int. J. Parasitol.">
        <title>LmxMPK4, an essential mitogen-activated protein kinase of Leishmania mexicana is phosphorylated and activated by the STE7-like protein kinase LmxMKK5.</title>
        <authorList>
            <person name="von Freyend S.J."/>
            <person name="Rosenqvist H."/>
            <person name="Fink A."/>
            <person name="Melzer I.M."/>
            <person name="Clos J."/>
            <person name="Jensen O.N."/>
            <person name="Wiese M."/>
        </authorList>
    </citation>
    <scope>CATALYTIC ACTIVITY</scope>
    <scope>PHOSPHORYLATION AT SER-186; SER-187; THR-190 AND TYR-192</scope>
    <scope>MUTAGENESIS OF LYS-59</scope>
</reference>
<organism evidence="7">
    <name type="scientific">Leishmania mexicana</name>
    <dbReference type="NCBI Taxonomy" id="5665"/>
    <lineage>
        <taxon>Eukaryota</taxon>
        <taxon>Discoba</taxon>
        <taxon>Euglenozoa</taxon>
        <taxon>Kinetoplastea</taxon>
        <taxon>Metakinetoplastina</taxon>
        <taxon>Trypanosomatida</taxon>
        <taxon>Trypanosomatidae</taxon>
        <taxon>Leishmaniinae</taxon>
        <taxon>Leishmania</taxon>
    </lineage>
</organism>
<name>MPK4_LEIME</name>
<protein>
    <recommendedName>
        <fullName evidence="5">Mitogen-activated protein kinase 4</fullName>
        <ecNumber evidence="3 4">2.7.11.24</ecNumber>
    </recommendedName>
    <alternativeName>
        <fullName evidence="5">LmxMPK4</fullName>
    </alternativeName>
</protein>
<evidence type="ECO:0000255" key="1">
    <source>
        <dbReference type="PROSITE-ProRule" id="PRU00159"/>
    </source>
</evidence>
<evidence type="ECO:0000269" key="2">
    <source>
    </source>
</evidence>
<evidence type="ECO:0000269" key="3">
    <source>
    </source>
</evidence>
<evidence type="ECO:0000269" key="4">
    <source>
    </source>
</evidence>
<evidence type="ECO:0000303" key="5">
    <source>
    </source>
</evidence>
<evidence type="ECO:0000305" key="6"/>
<evidence type="ECO:0000312" key="7">
    <source>
        <dbReference type="EMBL" id="CAC07958.1"/>
    </source>
</evidence>
<proteinExistence type="evidence at protein level"/>
<feature type="chain" id="PRO_0000449293" description="Mitogen-activated protein kinase 4">
    <location>
        <begin position="1"/>
        <end position="363"/>
    </location>
</feature>
<feature type="domain" description="Protein kinase" evidence="1">
    <location>
        <begin position="30"/>
        <end position="318"/>
    </location>
</feature>
<feature type="short sequence motif" description="TQY" evidence="4">
    <location>
        <begin position="190"/>
        <end position="192"/>
    </location>
</feature>
<feature type="active site" description="Proton acceptor" evidence="1">
    <location>
        <position position="156"/>
    </location>
</feature>
<feature type="binding site" evidence="1">
    <location>
        <begin position="36"/>
        <end position="44"/>
    </location>
    <ligand>
        <name>ATP</name>
        <dbReference type="ChEBI" id="CHEBI:30616"/>
    </ligand>
</feature>
<feature type="binding site" evidence="1">
    <location>
        <position position="59"/>
    </location>
    <ligand>
        <name>ATP</name>
        <dbReference type="ChEBI" id="CHEBI:30616"/>
    </ligand>
</feature>
<feature type="modified residue" description="Phosphoserine" evidence="4">
    <location>
        <position position="186"/>
    </location>
</feature>
<feature type="modified residue" description="Phosphoserine" evidence="4">
    <location>
        <position position="187"/>
    </location>
</feature>
<feature type="modified residue" description="Phosphothreonine; by MKK5" evidence="4">
    <location>
        <position position="190"/>
    </location>
</feature>
<feature type="modified residue" description="Phosphotyrosine; by MKK5" evidence="4">
    <location>
        <position position="192"/>
    </location>
</feature>
<feature type="mutagenesis site" description="Loss of catalytic activity." evidence="3 4">
    <original>K</original>
    <variation>M</variation>
    <location>
        <position position="59"/>
    </location>
</feature>
<accession>Q9GRU1</accession>
<gene>
    <name evidence="5" type="primary">MPK4</name>
</gene>
<sequence length="363" mass="41548">MTQLVPLAELPSGKKIYSVRGQRFEVDRQYDLVKVVGFGACGTVCSAVVNGSGERVAIKRLSRVFGDLREGKRILREMEIMTSLKHNNLIRLHHFMRPQSKETFEDIYLVMDLYDTDLNRIIRSRQKLTDEHLQYFMIQAFRGLHYLHSAKVMHRDLKPSNLLVNADCALAICDFGLARDDQVMSSSDLTQYVVTRWYRPPEVLGMGSNQYTSAVDVWSLGLIFAELMVGRALLPGTDYIGQLVMIVNLLGSPSIDDMEFLSSEAKAFILSQPHRPALSFRDLFPMATEEATDLLSKLLVFHPARRLTAKQVMEHPYFSKYRDAAEEADAPDPFVWNHSHIETKEQLREDLWRVVEAHSQLNE</sequence>
<comment type="function">
    <text evidence="3">Essential for the two main proliferating life stages, the promastigotes and amastigotes, of the parasite.</text>
</comment>
<comment type="catalytic activity">
    <reaction evidence="3 4">
        <text>L-seryl-[protein] + ATP = O-phospho-L-seryl-[protein] + ADP + H(+)</text>
        <dbReference type="Rhea" id="RHEA:17989"/>
        <dbReference type="Rhea" id="RHEA-COMP:9863"/>
        <dbReference type="Rhea" id="RHEA-COMP:11604"/>
        <dbReference type="ChEBI" id="CHEBI:15378"/>
        <dbReference type="ChEBI" id="CHEBI:29999"/>
        <dbReference type="ChEBI" id="CHEBI:30616"/>
        <dbReference type="ChEBI" id="CHEBI:83421"/>
        <dbReference type="ChEBI" id="CHEBI:456216"/>
        <dbReference type="EC" id="2.7.11.24"/>
    </reaction>
</comment>
<comment type="catalytic activity">
    <reaction evidence="3 4">
        <text>L-threonyl-[protein] + ATP = O-phospho-L-threonyl-[protein] + ADP + H(+)</text>
        <dbReference type="Rhea" id="RHEA:46608"/>
        <dbReference type="Rhea" id="RHEA-COMP:11060"/>
        <dbReference type="Rhea" id="RHEA-COMP:11605"/>
        <dbReference type="ChEBI" id="CHEBI:15378"/>
        <dbReference type="ChEBI" id="CHEBI:30013"/>
        <dbReference type="ChEBI" id="CHEBI:30616"/>
        <dbReference type="ChEBI" id="CHEBI:61977"/>
        <dbReference type="ChEBI" id="CHEBI:456216"/>
        <dbReference type="EC" id="2.7.11.24"/>
    </reaction>
</comment>
<comment type="cofactor">
    <cofactor evidence="3">
        <name>Mg(2+)</name>
        <dbReference type="ChEBI" id="CHEBI:18420"/>
    </cofactor>
    <text evidence="3">Can use both Mg(2+) and Mn(2+) in vitro and shows higher activity with Mn(2+) but Mg(2+) is likely to be the in vivo cofactor.</text>
</comment>
<comment type="biophysicochemical properties">
    <phDependence>
        <text evidence="3">Optimum pH is 6-7.</text>
    </phDependence>
</comment>
<comment type="developmental stage">
    <text evidence="2 3">Expressed in promastigotes and to a lower extent in axenic amastigotes (at protein level) (PubMed:14636673, PubMed:16384531). Low expression levels in lesion-derived amastigotes (at protein level) (PubMed:14636673, PubMed:16384531).</text>
</comment>
<comment type="domain">
    <text evidence="4">The TXY motif contains the threonine and tyrosine residues whose phosphorylation activates the MAP kinases.</text>
</comment>
<comment type="PTM">
    <text evidence="4">Dually phosphorylated on Thr-190 and Tyr-192, which activates the enzyme.</text>
</comment>
<comment type="similarity">
    <text evidence="6">Belongs to the protein kinase superfamily. CMGC Ser/Thr protein kinase family. MAP kinase subfamily.</text>
</comment>
<keyword id="KW-0067">ATP-binding</keyword>
<keyword id="KW-0418">Kinase</keyword>
<keyword id="KW-0460">Magnesium</keyword>
<keyword id="KW-0479">Metal-binding</keyword>
<keyword id="KW-0547">Nucleotide-binding</keyword>
<keyword id="KW-0597">Phosphoprotein</keyword>
<keyword id="KW-0723">Serine/threonine-protein kinase</keyword>
<keyword id="KW-0808">Transferase</keyword>